<feature type="chain" id="PRO_0000397228" description="26S proteasome regulatory subunit 6B homolog">
    <location>
        <begin position="1"/>
        <end position="414"/>
    </location>
</feature>
<feature type="region of interest" description="Disordered" evidence="4">
    <location>
        <begin position="1"/>
        <end position="33"/>
    </location>
</feature>
<feature type="coiled-coil region" evidence="3">
    <location>
        <begin position="55"/>
        <end position="81"/>
    </location>
</feature>
<feature type="compositionally biased region" description="Low complexity" evidence="4">
    <location>
        <begin position="21"/>
        <end position="30"/>
    </location>
</feature>
<feature type="binding site" evidence="3">
    <location>
        <begin position="202"/>
        <end position="209"/>
    </location>
    <ligand>
        <name>ATP</name>
        <dbReference type="ChEBI" id="CHEBI:30616"/>
    </ligand>
</feature>
<organism>
    <name type="scientific">Helianthus annuus</name>
    <name type="common">Common sunflower</name>
    <dbReference type="NCBI Taxonomy" id="4232"/>
    <lineage>
        <taxon>Eukaryota</taxon>
        <taxon>Viridiplantae</taxon>
        <taxon>Streptophyta</taxon>
        <taxon>Embryophyta</taxon>
        <taxon>Tracheophyta</taxon>
        <taxon>Spermatophyta</taxon>
        <taxon>Magnoliopsida</taxon>
        <taxon>eudicotyledons</taxon>
        <taxon>Gunneridae</taxon>
        <taxon>Pentapetalae</taxon>
        <taxon>asterids</taxon>
        <taxon>campanulids</taxon>
        <taxon>Asterales</taxon>
        <taxon>Asteraceae</taxon>
        <taxon>Asteroideae</taxon>
        <taxon>Heliantheae alliance</taxon>
        <taxon>Heliantheae</taxon>
        <taxon>Helianthus</taxon>
    </lineage>
</organism>
<evidence type="ECO:0000250" key="1">
    <source>
        <dbReference type="UniProtKB" id="P43686"/>
    </source>
</evidence>
<evidence type="ECO:0000250" key="2">
    <source>
        <dbReference type="UniProtKB" id="P54778"/>
    </source>
</evidence>
<evidence type="ECO:0000255" key="3"/>
<evidence type="ECO:0000256" key="4">
    <source>
        <dbReference type="SAM" id="MobiDB-lite"/>
    </source>
</evidence>
<evidence type="ECO:0000269" key="5">
    <source ref="1"/>
</evidence>
<evidence type="ECO:0000269" key="6">
    <source ref="2"/>
</evidence>
<evidence type="ECO:0000269" key="7">
    <source ref="3"/>
</evidence>
<evidence type="ECO:0000305" key="8"/>
<comment type="function">
    <text evidence="1">The 26S proteasome is involved in the ATP-dependent degradation of ubiquitinated proteins. The regulatory (or ATPase) complex confers ATP dependency and substrate specificity to the 26S complex (By similarity).</text>
</comment>
<comment type="subcellular location">
    <subcellularLocation>
        <location evidence="1">Cytoplasm</location>
    </subcellularLocation>
    <subcellularLocation>
        <location evidence="1">Nucleus</location>
    </subcellularLocation>
</comment>
<comment type="induction">
    <text evidence="7">Down-regulated in response to mixed metal ion contamination (cadmium, copper, lead and zinc), but not in response to zinc ion contamination.</text>
</comment>
<comment type="similarity">
    <text evidence="3">Belongs to the AAA ATPase family.</text>
</comment>
<sequence>MAATMVLDPKPSSTPPPTLPNPYTTDSQSTDSEDDLYTRLKTLDRQIEFIDIQEEYVKDELKNLKREQLRSQEEVKRIQSVPLVIGQFMEMIDQNNGIVGSTTGSNYYVRILSTINRELLKPSASVALHRHSNALVDVLPPEADSSISLLSQSEKPDVTYNDIGGCDIQKQEIREAVELPLTHHELYKQIGIDPPRGVLLYGPPGTGKTMLAKAVANHTTAAFIRVVGSEFVQKYLGEGPRMVRDVFRLAKENAPAIIFIDEVDAIATARFDAQTGADREVQRILMELLNQMDGFDQTVNVKVIMATNRADTLDPALLRPGRLDRKIEFPLPDRRQKRLVFQVCTAKMNLSDEVDLEDYVSRPDKISAAEITAICQEAGMHAVRKNRYVILPKDFEKGYRTNVKKPDTDFDFYK</sequence>
<dbReference type="EMBL" id="DY920613">
    <property type="status" value="NOT_ANNOTATED_CDS"/>
    <property type="molecule type" value="mRNA"/>
</dbReference>
<dbReference type="EMBL" id="BQ915537">
    <property type="status" value="NOT_ANNOTATED_CDS"/>
    <property type="molecule type" value="mRNA"/>
</dbReference>
<dbReference type="RefSeq" id="XP_021977968.1">
    <property type="nucleotide sequence ID" value="XM_022122276.2"/>
</dbReference>
<dbReference type="SMR" id="P85200"/>
<dbReference type="EnsemblPlants" id="mRNA:HanXRQr2_Chr08g0346931">
    <property type="protein sequence ID" value="mRNA:HanXRQr2_Chr08g0346931"/>
    <property type="gene ID" value="HanXRQr2_Chr08g0346931"/>
</dbReference>
<dbReference type="GeneID" id="110873361"/>
<dbReference type="Gramene" id="mRNA:HanXRQr2_Chr08g0346931">
    <property type="protein sequence ID" value="mRNA:HanXRQr2_Chr08g0346931"/>
    <property type="gene ID" value="HanXRQr2_Chr08g0346931"/>
</dbReference>
<dbReference type="OMA" id="NSMINIY"/>
<dbReference type="OrthoDB" id="10255768at2759"/>
<dbReference type="GO" id="GO:0005737">
    <property type="term" value="C:cytoplasm"/>
    <property type="evidence" value="ECO:0007669"/>
    <property type="project" value="UniProtKB-SubCell"/>
</dbReference>
<dbReference type="GO" id="GO:0005634">
    <property type="term" value="C:nucleus"/>
    <property type="evidence" value="ECO:0007669"/>
    <property type="project" value="UniProtKB-SubCell"/>
</dbReference>
<dbReference type="GO" id="GO:0000502">
    <property type="term" value="C:proteasome complex"/>
    <property type="evidence" value="ECO:0007669"/>
    <property type="project" value="UniProtKB-KW"/>
</dbReference>
<dbReference type="GO" id="GO:0005524">
    <property type="term" value="F:ATP binding"/>
    <property type="evidence" value="ECO:0007669"/>
    <property type="project" value="UniProtKB-KW"/>
</dbReference>
<dbReference type="GO" id="GO:0016887">
    <property type="term" value="F:ATP hydrolysis activity"/>
    <property type="evidence" value="ECO:0007669"/>
    <property type="project" value="InterPro"/>
</dbReference>
<dbReference type="CDD" id="cd19502">
    <property type="entry name" value="RecA-like_PAN_like"/>
    <property type="match status" value="1"/>
</dbReference>
<dbReference type="FunFam" id="1.10.8.60:FF:000018">
    <property type="entry name" value="26S protease regulatory subunit 6B"/>
    <property type="match status" value="1"/>
</dbReference>
<dbReference type="FunFam" id="2.40.50.140:FF:000046">
    <property type="entry name" value="26S protease regulatory subunit 6B"/>
    <property type="match status" value="1"/>
</dbReference>
<dbReference type="FunFam" id="3.40.50.300:FF:000033">
    <property type="entry name" value="26S protease regulatory subunit 6B"/>
    <property type="match status" value="1"/>
</dbReference>
<dbReference type="Gene3D" id="1.10.8.60">
    <property type="match status" value="1"/>
</dbReference>
<dbReference type="Gene3D" id="2.40.50.140">
    <property type="entry name" value="Nucleic acid-binding proteins"/>
    <property type="match status" value="1"/>
</dbReference>
<dbReference type="Gene3D" id="3.40.50.300">
    <property type="entry name" value="P-loop containing nucleotide triphosphate hydrolases"/>
    <property type="match status" value="1"/>
</dbReference>
<dbReference type="InterPro" id="IPR050221">
    <property type="entry name" value="26S_Proteasome_ATPase"/>
</dbReference>
<dbReference type="InterPro" id="IPR003593">
    <property type="entry name" value="AAA+_ATPase"/>
</dbReference>
<dbReference type="InterPro" id="IPR041569">
    <property type="entry name" value="AAA_lid_3"/>
</dbReference>
<dbReference type="InterPro" id="IPR003959">
    <property type="entry name" value="ATPase_AAA_core"/>
</dbReference>
<dbReference type="InterPro" id="IPR003960">
    <property type="entry name" value="ATPase_AAA_CS"/>
</dbReference>
<dbReference type="InterPro" id="IPR012340">
    <property type="entry name" value="NA-bd_OB-fold"/>
</dbReference>
<dbReference type="InterPro" id="IPR027417">
    <property type="entry name" value="P-loop_NTPase"/>
</dbReference>
<dbReference type="InterPro" id="IPR032501">
    <property type="entry name" value="Prot_ATP_ID_OB_2nd"/>
</dbReference>
<dbReference type="PANTHER" id="PTHR23073">
    <property type="entry name" value="26S PROTEASOME REGULATORY SUBUNIT"/>
    <property type="match status" value="1"/>
</dbReference>
<dbReference type="Pfam" id="PF00004">
    <property type="entry name" value="AAA"/>
    <property type="match status" value="1"/>
</dbReference>
<dbReference type="Pfam" id="PF17862">
    <property type="entry name" value="AAA_lid_3"/>
    <property type="match status" value="1"/>
</dbReference>
<dbReference type="Pfam" id="PF16450">
    <property type="entry name" value="Prot_ATP_ID_OB_C"/>
    <property type="match status" value="1"/>
</dbReference>
<dbReference type="SMART" id="SM00382">
    <property type="entry name" value="AAA"/>
    <property type="match status" value="1"/>
</dbReference>
<dbReference type="SUPFAM" id="SSF52540">
    <property type="entry name" value="P-loop containing nucleoside triphosphate hydrolases"/>
    <property type="match status" value="1"/>
</dbReference>
<dbReference type="PROSITE" id="PS00674">
    <property type="entry name" value="AAA"/>
    <property type="match status" value="1"/>
</dbReference>
<protein>
    <recommendedName>
        <fullName evidence="2">26S proteasome regulatory subunit 6B homolog</fullName>
    </recommendedName>
</protein>
<reference evidence="8" key="1">
    <citation type="submission" date="2006-03" db="EMBL/GenBank/DDBJ databases">
        <title>Sunflower (Helianthus annuus) ESTs (set 2) from the compositae genome project http://compgenomics.ucdavis.edu/.</title>
        <authorList>
            <person name="Michelmore R.W."/>
            <person name="Knapp S."/>
            <person name="Rieseberg L."/>
            <person name="Bradford K."/>
            <person name="Kesseli R."/>
            <person name="Boore J."/>
            <person name="Kozik A."/>
            <person name="Matvienko M."/>
            <person name="Lavelle D."/>
            <person name="Lai Z."/>
        </authorList>
    </citation>
    <scope>NUCLEOTIDE SEQUENCE [LARGE SCALE MRNA] OF 1-277</scope>
    <source>
        <strain evidence="5">cv. ANN1312</strain>
    </source>
</reference>
<reference evidence="8" key="2">
    <citation type="submission" date="2002-08" db="EMBL/GenBank/DDBJ databases">
        <title>Lettuce and sunflower ESTs from the compositae genome project http://compgenomics.ucdavis.edu/.</title>
        <authorList>
            <person name="Kozik A."/>
            <person name="Michelmore R.W."/>
            <person name="Knapp S."/>
            <person name="Matvienko M."/>
            <person name="Rieseberg L."/>
            <person name="Lin H."/>
            <person name="van Damme M."/>
            <person name="Lavelle D."/>
            <person name="Chevalier P."/>
            <person name="Ziegle J."/>
            <person name="Ellison P."/>
            <person name="Kolkman J."/>
            <person name="Slabaugh M.S."/>
            <person name="Livingston K."/>
            <person name="Zhou Y."/>
            <person name="Lai Z."/>
            <person name="Church S."/>
            <person name="Jackson L."/>
            <person name="Bradford K."/>
        </authorList>
    </citation>
    <scope>NUCLEOTIDE SEQUENCE [LARGE SCALE MRNA] OF 208-414</scope>
    <source>
        <strain evidence="6">cv. RHA801</strain>
    </source>
</reference>
<reference evidence="8" key="3">
    <citation type="journal article" date="2009" name="Metallomics">
        <title>Evaluation of metal-ion stress in sunflower (Heliantus annus L.) leaves through proteomic changes.</title>
        <authorList>
            <person name="Garcia J.S."/>
            <person name="Souza G.H.M.F."/>
            <person name="Eberlin M.N."/>
            <person name="Arruda M.A.Z."/>
        </authorList>
    </citation>
    <scope>IDENTIFICATION BY MASS SPECTROMETRY</scope>
    <scope>INDUCTION</scope>
</reference>
<accession>P85200</accession>
<proteinExistence type="evidence at protein level"/>
<name>PRS6B_HELAN</name>
<keyword id="KW-0067">ATP-binding</keyword>
<keyword id="KW-0175">Coiled coil</keyword>
<keyword id="KW-0963">Cytoplasm</keyword>
<keyword id="KW-0547">Nucleotide-binding</keyword>
<keyword id="KW-0539">Nucleus</keyword>
<keyword id="KW-0647">Proteasome</keyword>